<dbReference type="EMBL" id="CP000887">
    <property type="protein sequence ID" value="ACD72123.1"/>
    <property type="molecule type" value="Genomic_DNA"/>
</dbReference>
<dbReference type="RefSeq" id="WP_002963757.1">
    <property type="nucleotide sequence ID" value="NC_010742.1"/>
</dbReference>
<dbReference type="SMR" id="B2SA93"/>
<dbReference type="GeneID" id="97534052"/>
<dbReference type="KEGG" id="bmc:BAbS19_I05920"/>
<dbReference type="HOGENOM" id="CLU_079503_1_1_5"/>
<dbReference type="Proteomes" id="UP000002565">
    <property type="component" value="Chromosome 1"/>
</dbReference>
<dbReference type="GO" id="GO:0005886">
    <property type="term" value="C:plasma membrane"/>
    <property type="evidence" value="ECO:0007669"/>
    <property type="project" value="UniProtKB-SubCell"/>
</dbReference>
<dbReference type="GO" id="GO:0020037">
    <property type="term" value="F:heme binding"/>
    <property type="evidence" value="ECO:0007669"/>
    <property type="project" value="InterPro"/>
</dbReference>
<dbReference type="GO" id="GO:0046872">
    <property type="term" value="F:metal ion binding"/>
    <property type="evidence" value="ECO:0007669"/>
    <property type="project" value="UniProtKB-KW"/>
</dbReference>
<dbReference type="GO" id="GO:0017004">
    <property type="term" value="P:cytochrome complex assembly"/>
    <property type="evidence" value="ECO:0007669"/>
    <property type="project" value="UniProtKB-KW"/>
</dbReference>
<dbReference type="Gene3D" id="2.40.50.140">
    <property type="entry name" value="Nucleic acid-binding proteins"/>
    <property type="match status" value="1"/>
</dbReference>
<dbReference type="HAMAP" id="MF_01959">
    <property type="entry name" value="CcmE"/>
    <property type="match status" value="1"/>
</dbReference>
<dbReference type="InterPro" id="IPR004329">
    <property type="entry name" value="CcmE"/>
</dbReference>
<dbReference type="InterPro" id="IPR036127">
    <property type="entry name" value="CcmE-like_sf"/>
</dbReference>
<dbReference type="InterPro" id="IPR012340">
    <property type="entry name" value="NA-bd_OB-fold"/>
</dbReference>
<dbReference type="NCBIfam" id="NF009727">
    <property type="entry name" value="PRK13254.1-1"/>
    <property type="match status" value="1"/>
</dbReference>
<dbReference type="NCBIfam" id="NF009730">
    <property type="entry name" value="PRK13254.1-4"/>
    <property type="match status" value="1"/>
</dbReference>
<dbReference type="NCBIfam" id="NF009731">
    <property type="entry name" value="PRK13254.1-5"/>
    <property type="match status" value="1"/>
</dbReference>
<dbReference type="PANTHER" id="PTHR34128">
    <property type="entry name" value="CYTOCHROME C-TYPE BIOGENESIS PROTEIN CCME HOMOLOG, MITOCHONDRIAL"/>
    <property type="match status" value="1"/>
</dbReference>
<dbReference type="PANTHER" id="PTHR34128:SF2">
    <property type="entry name" value="CYTOCHROME C-TYPE BIOGENESIS PROTEIN CCME HOMOLOG, MITOCHONDRIAL"/>
    <property type="match status" value="1"/>
</dbReference>
<dbReference type="Pfam" id="PF03100">
    <property type="entry name" value="CcmE"/>
    <property type="match status" value="1"/>
</dbReference>
<dbReference type="SUPFAM" id="SSF82093">
    <property type="entry name" value="Heme chaperone CcmE"/>
    <property type="match status" value="1"/>
</dbReference>
<gene>
    <name evidence="1" type="primary">ccmE</name>
    <name evidence="1" type="synonym">cycJ</name>
    <name type="ordered locus">BAbS19_I05920</name>
</gene>
<accession>B2SA93</accession>
<proteinExistence type="inferred from homology"/>
<comment type="function">
    <text evidence="1">Heme chaperone required for the biogenesis of c-type cytochromes. Transiently binds heme delivered by CcmC and transfers the heme to apo-cytochromes in a process facilitated by CcmF and CcmH.</text>
</comment>
<comment type="subcellular location">
    <subcellularLocation>
        <location evidence="1">Cell inner membrane</location>
        <topology evidence="1">Single-pass type II membrane protein</topology>
        <orientation evidence="1">Periplasmic side</orientation>
    </subcellularLocation>
</comment>
<comment type="similarity">
    <text evidence="1">Belongs to the CcmE/CycJ family.</text>
</comment>
<name>CCME_BRUA1</name>
<organism>
    <name type="scientific">Brucella abortus (strain S19)</name>
    <dbReference type="NCBI Taxonomy" id="430066"/>
    <lineage>
        <taxon>Bacteria</taxon>
        <taxon>Pseudomonadati</taxon>
        <taxon>Pseudomonadota</taxon>
        <taxon>Alphaproteobacteria</taxon>
        <taxon>Hyphomicrobiales</taxon>
        <taxon>Brucellaceae</taxon>
        <taxon>Brucella/Ochrobactrum group</taxon>
        <taxon>Brucella</taxon>
    </lineage>
</organism>
<protein>
    <recommendedName>
        <fullName evidence="1">Cytochrome c-type biogenesis protein CcmE</fullName>
    </recommendedName>
    <alternativeName>
        <fullName evidence="1">Cytochrome c maturation protein E</fullName>
    </alternativeName>
    <alternativeName>
        <fullName evidence="1">Heme chaperone CcmE</fullName>
    </alternativeName>
</protein>
<reference key="1">
    <citation type="journal article" date="2008" name="PLoS ONE">
        <title>Genome sequence of Brucella abortus vaccine strain S19 compared to virulent strains yields candidate virulence genes.</title>
        <authorList>
            <person name="Crasta O.R."/>
            <person name="Folkerts O."/>
            <person name="Fei Z."/>
            <person name="Mane S.P."/>
            <person name="Evans C."/>
            <person name="Martino-Catt S."/>
            <person name="Bricker B."/>
            <person name="Yu G."/>
            <person name="Du L."/>
            <person name="Sobral B.W."/>
        </authorList>
    </citation>
    <scope>NUCLEOTIDE SEQUENCE [LARGE SCALE GENOMIC DNA]</scope>
    <source>
        <strain>S19</strain>
    </source>
</reference>
<keyword id="KW-0997">Cell inner membrane</keyword>
<keyword id="KW-1003">Cell membrane</keyword>
<keyword id="KW-0201">Cytochrome c-type biogenesis</keyword>
<keyword id="KW-0349">Heme</keyword>
<keyword id="KW-0408">Iron</keyword>
<keyword id="KW-0472">Membrane</keyword>
<keyword id="KW-0479">Metal-binding</keyword>
<keyword id="KW-0735">Signal-anchor</keyword>
<keyword id="KW-0812">Transmembrane</keyword>
<keyword id="KW-1133">Transmembrane helix</keyword>
<feature type="chain" id="PRO_1000189007" description="Cytochrome c-type biogenesis protein CcmE">
    <location>
        <begin position="1"/>
        <end position="165"/>
    </location>
</feature>
<feature type="topological domain" description="Cytoplasmic" evidence="1">
    <location>
        <begin position="1"/>
        <end position="29"/>
    </location>
</feature>
<feature type="transmembrane region" description="Helical; Signal-anchor for type II membrane protein" evidence="1">
    <location>
        <begin position="30"/>
        <end position="50"/>
    </location>
</feature>
<feature type="topological domain" description="Periplasmic" evidence="1">
    <location>
        <begin position="51"/>
        <end position="165"/>
    </location>
</feature>
<feature type="binding site" description="covalent" evidence="1">
    <location>
        <position position="143"/>
    </location>
    <ligand>
        <name>heme</name>
        <dbReference type="ChEBI" id="CHEBI:30413"/>
    </ligand>
</feature>
<feature type="binding site" description="axial binding residue" evidence="1">
    <location>
        <position position="147"/>
    </location>
    <ligand>
        <name>heme</name>
        <dbReference type="ChEBI" id="CHEBI:30413"/>
    </ligand>
    <ligandPart>
        <name>Fe</name>
        <dbReference type="ChEBI" id="CHEBI:18248"/>
    </ligandPart>
</feature>
<sequence length="165" mass="17977">MSATAEQNARNPKGKGGFARTVSQRKRKRLFLIGGALAVLAVAVGLMLTAFNQDIRFFRTPADLTEQDMTSGARFRLGGLVEEGSVSRTGSELRFTVTDTIKTVKVVFEGIPPDLFREGQGVVAEGRFGSDGLFRADNVLAKHDENYVPKDLADSLKKKGVWEGK</sequence>
<evidence type="ECO:0000255" key="1">
    <source>
        <dbReference type="HAMAP-Rule" id="MF_01959"/>
    </source>
</evidence>